<protein>
    <recommendedName>
        <fullName>Serine carboxypeptidase-like 40</fullName>
        <ecNumber>3.4.16.-</ecNumber>
    </recommendedName>
</protein>
<comment type="function">
    <text evidence="1">Probable carboxypeptidase.</text>
</comment>
<comment type="subcellular location">
    <subcellularLocation>
        <location evidence="4">Secreted</location>
    </subcellularLocation>
</comment>
<comment type="tissue specificity">
    <text evidence="3">Expressed in roots, leaves, flowers and siliques.</text>
</comment>
<comment type="similarity">
    <text evidence="4">Belongs to the peptidase S10 family.</text>
</comment>
<reference key="1">
    <citation type="journal article" date="2000" name="Nature">
        <title>Sequence and analysis of chromosome 3 of the plant Arabidopsis thaliana.</title>
        <authorList>
            <person name="Salanoubat M."/>
            <person name="Lemcke K."/>
            <person name="Rieger M."/>
            <person name="Ansorge W."/>
            <person name="Unseld M."/>
            <person name="Fartmann B."/>
            <person name="Valle G."/>
            <person name="Bloecker H."/>
            <person name="Perez-Alonso M."/>
            <person name="Obermaier B."/>
            <person name="Delseny M."/>
            <person name="Boutry M."/>
            <person name="Grivell L.A."/>
            <person name="Mache R."/>
            <person name="Puigdomenech P."/>
            <person name="De Simone V."/>
            <person name="Choisne N."/>
            <person name="Artiguenave F."/>
            <person name="Robert C."/>
            <person name="Brottier P."/>
            <person name="Wincker P."/>
            <person name="Cattolico L."/>
            <person name="Weissenbach J."/>
            <person name="Saurin W."/>
            <person name="Quetier F."/>
            <person name="Schaefer M."/>
            <person name="Mueller-Auer S."/>
            <person name="Gabel C."/>
            <person name="Fuchs M."/>
            <person name="Benes V."/>
            <person name="Wurmbach E."/>
            <person name="Drzonek H."/>
            <person name="Erfle H."/>
            <person name="Jordan N."/>
            <person name="Bangert S."/>
            <person name="Wiedelmann R."/>
            <person name="Kranz H."/>
            <person name="Voss H."/>
            <person name="Holland R."/>
            <person name="Brandt P."/>
            <person name="Nyakatura G."/>
            <person name="Vezzi A."/>
            <person name="D'Angelo M."/>
            <person name="Pallavicini A."/>
            <person name="Toppo S."/>
            <person name="Simionati B."/>
            <person name="Conrad A."/>
            <person name="Hornischer K."/>
            <person name="Kauer G."/>
            <person name="Loehnert T.-H."/>
            <person name="Nordsiek G."/>
            <person name="Reichelt J."/>
            <person name="Scharfe M."/>
            <person name="Schoen O."/>
            <person name="Bargues M."/>
            <person name="Terol J."/>
            <person name="Climent J."/>
            <person name="Navarro P."/>
            <person name="Collado C."/>
            <person name="Perez-Perez A."/>
            <person name="Ottenwaelder B."/>
            <person name="Duchemin D."/>
            <person name="Cooke R."/>
            <person name="Laudie M."/>
            <person name="Berger-Llauro C."/>
            <person name="Purnelle B."/>
            <person name="Masuy D."/>
            <person name="de Haan M."/>
            <person name="Maarse A.C."/>
            <person name="Alcaraz J.-P."/>
            <person name="Cottet A."/>
            <person name="Casacuberta E."/>
            <person name="Monfort A."/>
            <person name="Argiriou A."/>
            <person name="Flores M."/>
            <person name="Liguori R."/>
            <person name="Vitale D."/>
            <person name="Mannhaupt G."/>
            <person name="Haase D."/>
            <person name="Schoof H."/>
            <person name="Rudd S."/>
            <person name="Zaccaria P."/>
            <person name="Mewes H.-W."/>
            <person name="Mayer K.F.X."/>
            <person name="Kaul S."/>
            <person name="Town C.D."/>
            <person name="Koo H.L."/>
            <person name="Tallon L.J."/>
            <person name="Jenkins J."/>
            <person name="Rooney T."/>
            <person name="Rizzo M."/>
            <person name="Walts A."/>
            <person name="Utterback T."/>
            <person name="Fujii C.Y."/>
            <person name="Shea T.P."/>
            <person name="Creasy T.H."/>
            <person name="Haas B."/>
            <person name="Maiti R."/>
            <person name="Wu D."/>
            <person name="Peterson J."/>
            <person name="Van Aken S."/>
            <person name="Pai G."/>
            <person name="Militscher J."/>
            <person name="Sellers P."/>
            <person name="Gill J.E."/>
            <person name="Feldblyum T.V."/>
            <person name="Preuss D."/>
            <person name="Lin X."/>
            <person name="Nierman W.C."/>
            <person name="Salzberg S.L."/>
            <person name="White O."/>
            <person name="Venter J.C."/>
            <person name="Fraser C.M."/>
            <person name="Kaneko T."/>
            <person name="Nakamura Y."/>
            <person name="Sato S."/>
            <person name="Kato T."/>
            <person name="Asamizu E."/>
            <person name="Sasamoto S."/>
            <person name="Kimura T."/>
            <person name="Idesawa K."/>
            <person name="Kawashima K."/>
            <person name="Kishida Y."/>
            <person name="Kiyokawa C."/>
            <person name="Kohara M."/>
            <person name="Matsumoto M."/>
            <person name="Matsuno A."/>
            <person name="Muraki A."/>
            <person name="Nakayama S."/>
            <person name="Nakazaki N."/>
            <person name="Shinpo S."/>
            <person name="Takeuchi C."/>
            <person name="Wada T."/>
            <person name="Watanabe A."/>
            <person name="Yamada M."/>
            <person name="Yasuda M."/>
            <person name="Tabata S."/>
        </authorList>
    </citation>
    <scope>NUCLEOTIDE SEQUENCE [LARGE SCALE GENOMIC DNA]</scope>
    <source>
        <strain>cv. Columbia</strain>
    </source>
</reference>
<reference key="2">
    <citation type="journal article" date="2017" name="Plant J.">
        <title>Araport11: a complete reannotation of the Arabidopsis thaliana reference genome.</title>
        <authorList>
            <person name="Cheng C.Y."/>
            <person name="Krishnakumar V."/>
            <person name="Chan A.P."/>
            <person name="Thibaud-Nissen F."/>
            <person name="Schobel S."/>
            <person name="Town C.D."/>
        </authorList>
    </citation>
    <scope>GENOME REANNOTATION</scope>
    <source>
        <strain>cv. Columbia</strain>
    </source>
</reference>
<reference key="3">
    <citation type="submission" date="2002-03" db="EMBL/GenBank/DDBJ databases">
        <title>Full-length cDNA from Arabidopsis thaliana.</title>
        <authorList>
            <person name="Brover V.V."/>
            <person name="Troukhan M.E."/>
            <person name="Alexandrov N.A."/>
            <person name="Lu Y.-P."/>
            <person name="Flavell R.B."/>
            <person name="Feldmann K.A."/>
        </authorList>
    </citation>
    <scope>NUCLEOTIDE SEQUENCE [LARGE SCALE MRNA]</scope>
</reference>
<reference key="4">
    <citation type="submission" date="2006-07" db="EMBL/GenBank/DDBJ databases">
        <title>Large-scale analysis of RIKEN Arabidopsis full-length (RAFL) cDNAs.</title>
        <authorList>
            <person name="Totoki Y."/>
            <person name="Seki M."/>
            <person name="Ishida J."/>
            <person name="Nakajima M."/>
            <person name="Enju A."/>
            <person name="Kamiya A."/>
            <person name="Narusaka M."/>
            <person name="Shin-i T."/>
            <person name="Nakagawa M."/>
            <person name="Sakamoto N."/>
            <person name="Oishi K."/>
            <person name="Kohara Y."/>
            <person name="Kobayashi M."/>
            <person name="Toyoda A."/>
            <person name="Sakaki Y."/>
            <person name="Sakurai T."/>
            <person name="Iida K."/>
            <person name="Akiyama K."/>
            <person name="Satou M."/>
            <person name="Toyoda T."/>
            <person name="Konagaya A."/>
            <person name="Carninci P."/>
            <person name="Kawai J."/>
            <person name="Hayashizaki Y."/>
            <person name="Shinozaki K."/>
        </authorList>
    </citation>
    <scope>NUCLEOTIDE SEQUENCE [LARGE SCALE MRNA] OF 174-502</scope>
    <source>
        <strain>cv. Columbia</strain>
    </source>
</reference>
<reference key="5">
    <citation type="journal article" date="2003" name="Science">
        <title>Empirical analysis of transcriptional activity in the Arabidopsis genome.</title>
        <authorList>
            <person name="Yamada K."/>
            <person name="Lim J."/>
            <person name="Dale J.M."/>
            <person name="Chen H."/>
            <person name="Shinn P."/>
            <person name="Palm C.J."/>
            <person name="Southwick A.M."/>
            <person name="Wu H.C."/>
            <person name="Kim C.J."/>
            <person name="Nguyen M."/>
            <person name="Pham P.K."/>
            <person name="Cheuk R.F."/>
            <person name="Karlin-Newmann G."/>
            <person name="Liu S.X."/>
            <person name="Lam B."/>
            <person name="Sakano H."/>
            <person name="Wu T."/>
            <person name="Yu G."/>
            <person name="Miranda M."/>
            <person name="Quach H.L."/>
            <person name="Tripp M."/>
            <person name="Chang C.H."/>
            <person name="Lee J.M."/>
            <person name="Toriumi M.J."/>
            <person name="Chan M.M."/>
            <person name="Tang C.C."/>
            <person name="Onodera C.S."/>
            <person name="Deng J.M."/>
            <person name="Akiyama K."/>
            <person name="Ansari Y."/>
            <person name="Arakawa T."/>
            <person name="Banh J."/>
            <person name="Banno F."/>
            <person name="Bowser L."/>
            <person name="Brooks S.Y."/>
            <person name="Carninci P."/>
            <person name="Chao Q."/>
            <person name="Choy N."/>
            <person name="Enju A."/>
            <person name="Goldsmith A.D."/>
            <person name="Gurjal M."/>
            <person name="Hansen N.F."/>
            <person name="Hayashizaki Y."/>
            <person name="Johnson-Hopson C."/>
            <person name="Hsuan V.W."/>
            <person name="Iida K."/>
            <person name="Karnes M."/>
            <person name="Khan S."/>
            <person name="Koesema E."/>
            <person name="Ishida J."/>
            <person name="Jiang P.X."/>
            <person name="Jones T."/>
            <person name="Kawai J."/>
            <person name="Kamiya A."/>
            <person name="Meyers C."/>
            <person name="Nakajima M."/>
            <person name="Narusaka M."/>
            <person name="Seki M."/>
            <person name="Sakurai T."/>
            <person name="Satou M."/>
            <person name="Tamse R."/>
            <person name="Vaysberg M."/>
            <person name="Wallender E.K."/>
            <person name="Wong C."/>
            <person name="Yamamura Y."/>
            <person name="Yuan S."/>
            <person name="Shinozaki K."/>
            <person name="Davis R.W."/>
            <person name="Theologis A."/>
            <person name="Ecker J.R."/>
        </authorList>
    </citation>
    <scope>NUCLEOTIDE SEQUENCE [LARGE SCALE MRNA] OF 269-502</scope>
    <source>
        <strain>cv. Columbia</strain>
    </source>
</reference>
<reference key="6">
    <citation type="journal article" date="2005" name="Plant Physiol.">
        <title>An expression and bioinformatics analysis of the Arabidopsis serine carboxypeptidase-like gene family.</title>
        <authorList>
            <person name="Fraser C.M."/>
            <person name="Rider L.W."/>
            <person name="Chapple C."/>
        </authorList>
    </citation>
    <scope>GENE FAMILY</scope>
    <scope>TISSUE SPECIFICITY</scope>
    <scope>NOMENCLATURE</scope>
</reference>
<organism>
    <name type="scientific">Arabidopsis thaliana</name>
    <name type="common">Mouse-ear cress</name>
    <dbReference type="NCBI Taxonomy" id="3702"/>
    <lineage>
        <taxon>Eukaryota</taxon>
        <taxon>Viridiplantae</taxon>
        <taxon>Streptophyta</taxon>
        <taxon>Embryophyta</taxon>
        <taxon>Tracheophyta</taxon>
        <taxon>Spermatophyta</taxon>
        <taxon>Magnoliopsida</taxon>
        <taxon>eudicotyledons</taxon>
        <taxon>Gunneridae</taxon>
        <taxon>Pentapetalae</taxon>
        <taxon>rosids</taxon>
        <taxon>malvids</taxon>
        <taxon>Brassicales</taxon>
        <taxon>Brassicaceae</taxon>
        <taxon>Camelineae</taxon>
        <taxon>Arabidopsis</taxon>
    </lineage>
</organism>
<feature type="signal peptide" evidence="2">
    <location>
        <begin position="1"/>
        <end position="24"/>
    </location>
</feature>
<feature type="chain" id="PRO_0000274655" description="Serine carboxypeptidase-like 40">
    <location>
        <begin position="25"/>
        <end position="502"/>
    </location>
</feature>
<feature type="active site" evidence="1">
    <location>
        <position position="229"/>
    </location>
</feature>
<feature type="active site" evidence="1">
    <location>
        <position position="420"/>
    </location>
</feature>
<feature type="active site" evidence="1">
    <location>
        <position position="473"/>
    </location>
</feature>
<feature type="glycosylation site" description="N-linked (GlcNAc...) asparagine" evidence="2">
    <location>
        <position position="103"/>
    </location>
</feature>
<feature type="glycosylation site" description="N-linked (GlcNAc...) asparagine" evidence="2">
    <location>
        <position position="187"/>
    </location>
</feature>
<feature type="glycosylation site" description="N-linked (GlcNAc...) asparagine" evidence="2">
    <location>
        <position position="333"/>
    </location>
</feature>
<feature type="glycosylation site" description="N-linked (GlcNAc...) asparagine" evidence="2">
    <location>
        <position position="373"/>
    </location>
</feature>
<feature type="glycosylation site" description="N-linked (GlcNAc...) asparagine" evidence="2">
    <location>
        <position position="436"/>
    </location>
</feature>
<feature type="disulfide bond" evidence="1">
    <location>
        <begin position="136"/>
        <end position="384"/>
    </location>
</feature>
<feature type="disulfide bond" evidence="1">
    <location>
        <begin position="293"/>
        <end position="307"/>
    </location>
</feature>
<feature type="disulfide bond" evidence="1">
    <location>
        <begin position="331"/>
        <end position="352"/>
    </location>
</feature>
<accession>Q0WRX3</accession>
<accession>Q84WK3</accession>
<accession>Q9LY68</accession>
<sequence length="502" mass="56240">MRKGQGYSYSVIASVLVLLCVVVSRIECSSQVHALSRLYLSKRGVGGSSTMDTSHFKAVKDLKPSSLRSAANQEGLRKRDLIRRLPGQPPVSFDQYGGYVTVNESAGRSFFYYFVEASKSKDSSPLLLWLNGGPGCSSLAYGALQELGPFRVHSDGKTLFRNRYAWNNAANVLFLESPAGVGFSYTNTTSDLEKHGDRNTAADNYIFLVNWLERFPEYKGRDLYIAGESYAGHYVPQLAHTILLHHRSFFNLKGILIGNAVINDETDLMGMYDFFESHALISEDSLARLKSNCDLKTESASVMTEECAVVSDQIDMDTYYLDIYNIYAPLCLNSTLTRRPKRGTTIREFDPCSDHYVQAYLNRPEVQAALHANATKLPYEWQPCSSVIKKWNDSPTTVIPLIKELMGQGVRVWVFSGDTDGRIPVTSTKYSLKKMNLTAKTAWHPWYLGGEVGGYTEEYKGKLTFATVRGAGHQVPSFQPKRSLSLFIHFLNDTPLPDTSRY</sequence>
<proteinExistence type="evidence at transcript level"/>
<keyword id="KW-0121">Carboxypeptidase</keyword>
<keyword id="KW-1015">Disulfide bond</keyword>
<keyword id="KW-0325">Glycoprotein</keyword>
<keyword id="KW-0378">Hydrolase</keyword>
<keyword id="KW-0645">Protease</keyword>
<keyword id="KW-1185">Reference proteome</keyword>
<keyword id="KW-0964">Secreted</keyword>
<keyword id="KW-0732">Signal</keyword>
<evidence type="ECO:0000250" key="1"/>
<evidence type="ECO:0000255" key="2"/>
<evidence type="ECO:0000269" key="3">
    <source>
    </source>
</evidence>
<evidence type="ECO:0000305" key="4"/>
<gene>
    <name type="primary">SCPL40</name>
    <name type="ordered locus">At3g63470</name>
    <name type="ORF">MAA21.100</name>
</gene>
<dbReference type="EC" id="3.4.16.-"/>
<dbReference type="EMBL" id="AL163818">
    <property type="protein sequence ID" value="CAB87800.1"/>
    <property type="molecule type" value="Genomic_DNA"/>
</dbReference>
<dbReference type="EMBL" id="CP002686">
    <property type="protein sequence ID" value="AEE80489.1"/>
    <property type="molecule type" value="Genomic_DNA"/>
</dbReference>
<dbReference type="EMBL" id="AY087589">
    <property type="protein sequence ID" value="AAM65131.1"/>
    <property type="molecule type" value="mRNA"/>
</dbReference>
<dbReference type="EMBL" id="AK228170">
    <property type="protein sequence ID" value="BAF00126.1"/>
    <property type="molecule type" value="mRNA"/>
</dbReference>
<dbReference type="EMBL" id="BT003126">
    <property type="protein sequence ID" value="AAO24558.1"/>
    <property type="molecule type" value="mRNA"/>
</dbReference>
<dbReference type="PIR" id="T49188">
    <property type="entry name" value="T49188"/>
</dbReference>
<dbReference type="RefSeq" id="NP_191906.1">
    <property type="nucleotide sequence ID" value="NM_116212.3"/>
</dbReference>
<dbReference type="SMR" id="Q0WRX3"/>
<dbReference type="FunCoup" id="Q0WRX3">
    <property type="interactions" value="67"/>
</dbReference>
<dbReference type="STRING" id="3702.Q0WRX3"/>
<dbReference type="ESTHER" id="arath-SCP40">
    <property type="family name" value="Carboxypeptidase_S10"/>
</dbReference>
<dbReference type="MEROPS" id="S10.A41"/>
<dbReference type="GlyCosmos" id="Q0WRX3">
    <property type="glycosylation" value="5 sites, No reported glycans"/>
</dbReference>
<dbReference type="GlyGen" id="Q0WRX3">
    <property type="glycosylation" value="5 sites"/>
</dbReference>
<dbReference type="PaxDb" id="3702-AT3G63470.1"/>
<dbReference type="ProteomicsDB" id="232826"/>
<dbReference type="EnsemblPlants" id="AT3G63470.1">
    <property type="protein sequence ID" value="AT3G63470.1"/>
    <property type="gene ID" value="AT3G63470"/>
</dbReference>
<dbReference type="GeneID" id="825522"/>
<dbReference type="Gramene" id="AT3G63470.1">
    <property type="protein sequence ID" value="AT3G63470.1"/>
    <property type="gene ID" value="AT3G63470"/>
</dbReference>
<dbReference type="KEGG" id="ath:AT3G63470"/>
<dbReference type="Araport" id="AT3G63470"/>
<dbReference type="TAIR" id="AT3G63470">
    <property type="gene designation" value="SCPL40"/>
</dbReference>
<dbReference type="eggNOG" id="KOG1282">
    <property type="taxonomic scope" value="Eukaryota"/>
</dbReference>
<dbReference type="HOGENOM" id="CLU_008523_13_2_1"/>
<dbReference type="InParanoid" id="Q0WRX3"/>
<dbReference type="OMA" id="PIKTEWH"/>
<dbReference type="PhylomeDB" id="Q0WRX3"/>
<dbReference type="PRO" id="PR:Q0WRX3"/>
<dbReference type="Proteomes" id="UP000006548">
    <property type="component" value="Chromosome 3"/>
</dbReference>
<dbReference type="ExpressionAtlas" id="Q0WRX3">
    <property type="expression patterns" value="baseline and differential"/>
</dbReference>
<dbReference type="GO" id="GO:0005576">
    <property type="term" value="C:extracellular region"/>
    <property type="evidence" value="ECO:0007669"/>
    <property type="project" value="UniProtKB-SubCell"/>
</dbReference>
<dbReference type="GO" id="GO:0004185">
    <property type="term" value="F:serine-type carboxypeptidase activity"/>
    <property type="evidence" value="ECO:0007669"/>
    <property type="project" value="InterPro"/>
</dbReference>
<dbReference type="GO" id="GO:0006508">
    <property type="term" value="P:proteolysis"/>
    <property type="evidence" value="ECO:0007669"/>
    <property type="project" value="UniProtKB-KW"/>
</dbReference>
<dbReference type="FunFam" id="3.40.50.11320:FF:000001">
    <property type="entry name" value="Carboxypeptidase"/>
    <property type="match status" value="1"/>
</dbReference>
<dbReference type="FunFam" id="3.40.50.12670:FF:000002">
    <property type="entry name" value="Carboxypeptidase"/>
    <property type="match status" value="1"/>
</dbReference>
<dbReference type="FunFam" id="3.40.50.1820:FF:000030">
    <property type="entry name" value="Carboxypeptidase"/>
    <property type="match status" value="1"/>
</dbReference>
<dbReference type="Gene3D" id="3.40.50.11320">
    <property type="match status" value="1"/>
</dbReference>
<dbReference type="Gene3D" id="6.10.250.940">
    <property type="match status" value="1"/>
</dbReference>
<dbReference type="Gene3D" id="3.40.50.1820">
    <property type="entry name" value="alpha/beta hydrolase"/>
    <property type="match status" value="1"/>
</dbReference>
<dbReference type="InterPro" id="IPR029058">
    <property type="entry name" value="AB_hydrolase_fold"/>
</dbReference>
<dbReference type="InterPro" id="IPR001563">
    <property type="entry name" value="Peptidase_S10"/>
</dbReference>
<dbReference type="InterPro" id="IPR033124">
    <property type="entry name" value="Ser_caboxypep_his_AS"/>
</dbReference>
<dbReference type="InterPro" id="IPR018202">
    <property type="entry name" value="Ser_caboxypep_ser_AS"/>
</dbReference>
<dbReference type="PANTHER" id="PTHR11802:SF132">
    <property type="entry name" value="SERINE CARBOXYPEPTIDASE-LIKE 36-RELATED"/>
    <property type="match status" value="1"/>
</dbReference>
<dbReference type="PANTHER" id="PTHR11802">
    <property type="entry name" value="SERINE PROTEASE FAMILY S10 SERINE CARBOXYPEPTIDASE"/>
    <property type="match status" value="1"/>
</dbReference>
<dbReference type="Pfam" id="PF00450">
    <property type="entry name" value="Peptidase_S10"/>
    <property type="match status" value="1"/>
</dbReference>
<dbReference type="PRINTS" id="PR00724">
    <property type="entry name" value="CRBOXYPTASEC"/>
</dbReference>
<dbReference type="SUPFAM" id="SSF53474">
    <property type="entry name" value="alpha/beta-Hydrolases"/>
    <property type="match status" value="1"/>
</dbReference>
<dbReference type="PROSITE" id="PS00560">
    <property type="entry name" value="CARBOXYPEPT_SER_HIS"/>
    <property type="match status" value="1"/>
</dbReference>
<dbReference type="PROSITE" id="PS00131">
    <property type="entry name" value="CARBOXYPEPT_SER_SER"/>
    <property type="match status" value="1"/>
</dbReference>
<name>SCP40_ARATH</name>